<reference key="1">
    <citation type="journal article" date="2014" name="Stand. Genomic Sci.">
        <title>Complete genome sequence of Burkholderia phymatum STM815(T), a broad host range and efficient nitrogen-fixing symbiont of Mimosa species.</title>
        <authorList>
            <person name="Moulin L."/>
            <person name="Klonowska A."/>
            <person name="Caroline B."/>
            <person name="Booth K."/>
            <person name="Vriezen J.A."/>
            <person name="Melkonian R."/>
            <person name="James E.K."/>
            <person name="Young J.P."/>
            <person name="Bena G."/>
            <person name="Hauser L."/>
            <person name="Land M."/>
            <person name="Kyrpides N."/>
            <person name="Bruce D."/>
            <person name="Chain P."/>
            <person name="Copeland A."/>
            <person name="Pitluck S."/>
            <person name="Woyke T."/>
            <person name="Lizotte-Waniewski M."/>
            <person name="Bristow J."/>
            <person name="Riley M."/>
        </authorList>
    </citation>
    <scope>NUCLEOTIDE SEQUENCE [LARGE SCALE GENOMIC DNA]</scope>
    <source>
        <strain>DSM 17167 / CIP 108236 / LMG 21445 / STM815</strain>
    </source>
</reference>
<sequence>MRDETPEQPALLRSGYTTGSCATVTSLAAARLLLSGIASDVAEIVLPKGQHVPMKLVFCRLLNDGKDGAEAGTIKDAGDDPDVTHGAIVFARVRLADAPGVRFHAGPGVGTVTRAGLTLAVGEPAINPVPRQMMTAHLTDLAAEYGYAGGFEVAIGVENGEALAQKTMNPRLGIVGGLSILGTTGIVRPFSCSAYIASIHQGIDVARANGYRHIAACTGNASEDAMRAYYQLPDIALIEMGDFAGAVLKHLKRAPVDKLSMCGGFGKLSKLAAGHLDLHSRNSSIDLRQLAQWCASHAASNATLQAAIVGANTSQEALAMALKEGVPLGDIVCARARDVAREIVPASVEVEMFAIDRQGNIVGEAR</sequence>
<gene>
    <name evidence="1" type="primary">cbiD</name>
    <name type="ordered locus">Bphy_3141</name>
</gene>
<organism>
    <name type="scientific">Paraburkholderia phymatum (strain DSM 17167 / CIP 108236 / LMG 21445 / STM815)</name>
    <name type="common">Burkholderia phymatum</name>
    <dbReference type="NCBI Taxonomy" id="391038"/>
    <lineage>
        <taxon>Bacteria</taxon>
        <taxon>Pseudomonadati</taxon>
        <taxon>Pseudomonadota</taxon>
        <taxon>Betaproteobacteria</taxon>
        <taxon>Burkholderiales</taxon>
        <taxon>Burkholderiaceae</taxon>
        <taxon>Paraburkholderia</taxon>
    </lineage>
</organism>
<accession>B2JRI2</accession>
<dbReference type="EC" id="2.1.1.195" evidence="1"/>
<dbReference type="EMBL" id="CP001044">
    <property type="protein sequence ID" value="ACC72309.1"/>
    <property type="molecule type" value="Genomic_DNA"/>
</dbReference>
<dbReference type="RefSeq" id="WP_012402482.1">
    <property type="nucleotide sequence ID" value="NC_010623.1"/>
</dbReference>
<dbReference type="SMR" id="B2JRI2"/>
<dbReference type="STRING" id="391038.Bphy_3141"/>
<dbReference type="KEGG" id="bph:Bphy_3141"/>
<dbReference type="eggNOG" id="COG1903">
    <property type="taxonomic scope" value="Bacteria"/>
</dbReference>
<dbReference type="HOGENOM" id="CLU_041273_0_0_4"/>
<dbReference type="OrthoDB" id="6439987at2"/>
<dbReference type="UniPathway" id="UPA00148">
    <property type="reaction ID" value="UER00227"/>
</dbReference>
<dbReference type="Proteomes" id="UP000001192">
    <property type="component" value="Chromosome 2"/>
</dbReference>
<dbReference type="GO" id="GO:0043780">
    <property type="term" value="F:cobalt-precorrin-5B C1-methyltransferase activity"/>
    <property type="evidence" value="ECO:0007669"/>
    <property type="project" value="RHEA"/>
</dbReference>
<dbReference type="GO" id="GO:0019251">
    <property type="term" value="P:anaerobic cobalamin biosynthetic process"/>
    <property type="evidence" value="ECO:0007669"/>
    <property type="project" value="UniProtKB-UniRule"/>
</dbReference>
<dbReference type="GO" id="GO:0032259">
    <property type="term" value="P:methylation"/>
    <property type="evidence" value="ECO:0007669"/>
    <property type="project" value="UniProtKB-KW"/>
</dbReference>
<dbReference type="Gene3D" id="3.30.2110.10">
    <property type="entry name" value="CbiD-like"/>
    <property type="match status" value="1"/>
</dbReference>
<dbReference type="HAMAP" id="MF_00787">
    <property type="entry name" value="CbiD"/>
    <property type="match status" value="1"/>
</dbReference>
<dbReference type="InterPro" id="IPR002748">
    <property type="entry name" value="CbiD"/>
</dbReference>
<dbReference type="InterPro" id="IPR036074">
    <property type="entry name" value="CbiD_sf"/>
</dbReference>
<dbReference type="NCBIfam" id="TIGR00312">
    <property type="entry name" value="cbiD"/>
    <property type="match status" value="1"/>
</dbReference>
<dbReference type="NCBIfam" id="NF000849">
    <property type="entry name" value="PRK00075.1-1"/>
    <property type="match status" value="1"/>
</dbReference>
<dbReference type="PANTHER" id="PTHR35863">
    <property type="entry name" value="COBALT-PRECORRIN-5B C(1)-METHYLTRANSFERASE"/>
    <property type="match status" value="1"/>
</dbReference>
<dbReference type="PANTHER" id="PTHR35863:SF1">
    <property type="entry name" value="COBALT-PRECORRIN-5B C(1)-METHYLTRANSFERASE"/>
    <property type="match status" value="1"/>
</dbReference>
<dbReference type="Pfam" id="PF01888">
    <property type="entry name" value="CbiD"/>
    <property type="match status" value="1"/>
</dbReference>
<dbReference type="PIRSF" id="PIRSF026782">
    <property type="entry name" value="CbiD"/>
    <property type="match status" value="1"/>
</dbReference>
<dbReference type="SUPFAM" id="SSF111342">
    <property type="entry name" value="CbiD-like"/>
    <property type="match status" value="1"/>
</dbReference>
<keyword id="KW-0169">Cobalamin biosynthesis</keyword>
<keyword id="KW-0489">Methyltransferase</keyword>
<keyword id="KW-1185">Reference proteome</keyword>
<keyword id="KW-0949">S-adenosyl-L-methionine</keyword>
<keyword id="KW-0808">Transferase</keyword>
<comment type="function">
    <text evidence="1">Catalyzes the methylation of C-1 in cobalt-precorrin-5B to form cobalt-precorrin-6A.</text>
</comment>
<comment type="catalytic activity">
    <reaction evidence="1">
        <text>Co-precorrin-5B + S-adenosyl-L-methionine = Co-precorrin-6A + S-adenosyl-L-homocysteine</text>
        <dbReference type="Rhea" id="RHEA:26285"/>
        <dbReference type="ChEBI" id="CHEBI:57856"/>
        <dbReference type="ChEBI" id="CHEBI:59789"/>
        <dbReference type="ChEBI" id="CHEBI:60063"/>
        <dbReference type="ChEBI" id="CHEBI:60064"/>
        <dbReference type="EC" id="2.1.1.195"/>
    </reaction>
</comment>
<comment type="pathway">
    <text evidence="1">Cofactor biosynthesis; adenosylcobalamin biosynthesis; cob(II)yrinate a,c-diamide from sirohydrochlorin (anaerobic route): step 6/10.</text>
</comment>
<comment type="similarity">
    <text evidence="1">Belongs to the CbiD family.</text>
</comment>
<proteinExistence type="inferred from homology"/>
<evidence type="ECO:0000255" key="1">
    <source>
        <dbReference type="HAMAP-Rule" id="MF_00787"/>
    </source>
</evidence>
<feature type="chain" id="PRO_1000133731" description="Cobalt-precorrin-5B C(1)-methyltransferase">
    <location>
        <begin position="1"/>
        <end position="366"/>
    </location>
</feature>
<name>CBID_PARP8</name>
<protein>
    <recommendedName>
        <fullName evidence="1">Cobalt-precorrin-5B C(1)-methyltransferase</fullName>
        <ecNumber evidence="1">2.1.1.195</ecNumber>
    </recommendedName>
    <alternativeName>
        <fullName evidence="1">Cobalt-precorrin-6A synthase</fullName>
    </alternativeName>
</protein>